<dbReference type="EMBL" id="AF241316">
    <property type="status" value="NOT_ANNOTATED_CDS"/>
    <property type="molecule type" value="Genomic_DNA"/>
</dbReference>
<dbReference type="EMBL" id="DQ120629">
    <property type="protein sequence ID" value="ABB92415.1"/>
    <property type="molecule type" value="Genomic_DNA"/>
</dbReference>
<dbReference type="CCDS" id="CCDS47324.1"/>
<dbReference type="RefSeq" id="NP_001092763.1">
    <property type="nucleotide sequence ID" value="NM_001099293.3"/>
</dbReference>
<dbReference type="SMR" id="Q2VIQ3"/>
<dbReference type="BioGRID" id="130168">
    <property type="interactions" value="17"/>
</dbReference>
<dbReference type="FunCoup" id="Q2VIQ3">
    <property type="interactions" value="295"/>
</dbReference>
<dbReference type="IntAct" id="Q2VIQ3">
    <property type="interactions" value="7"/>
</dbReference>
<dbReference type="STRING" id="9606.ENSP00000387875"/>
<dbReference type="GlyGen" id="Q2VIQ3">
    <property type="glycosylation" value="1 site"/>
</dbReference>
<dbReference type="iPTMnet" id="Q2VIQ3"/>
<dbReference type="PhosphoSitePlus" id="Q2VIQ3"/>
<dbReference type="BioMuta" id="KIF4B"/>
<dbReference type="DMDM" id="158564279"/>
<dbReference type="jPOST" id="Q2VIQ3"/>
<dbReference type="MassIVE" id="Q2VIQ3"/>
<dbReference type="PaxDb" id="9606-ENSP00000387875"/>
<dbReference type="PeptideAtlas" id="Q2VIQ3"/>
<dbReference type="ProteomicsDB" id="61511"/>
<dbReference type="Antibodypedia" id="77177">
    <property type="antibodies" value="14 antibodies from 10 providers"/>
</dbReference>
<dbReference type="DNASU" id="285643"/>
<dbReference type="Ensembl" id="ENST00000435029.6">
    <property type="protein sequence ID" value="ENSP00000387875.3"/>
    <property type="gene ID" value="ENSG00000226650.6"/>
</dbReference>
<dbReference type="GeneID" id="285643"/>
<dbReference type="KEGG" id="hsa:285643"/>
<dbReference type="MANE-Select" id="ENST00000435029.6">
    <property type="protein sequence ID" value="ENSP00000387875.3"/>
    <property type="RefSeq nucleotide sequence ID" value="NM_001099293.3"/>
    <property type="RefSeq protein sequence ID" value="NP_001092763.1"/>
</dbReference>
<dbReference type="UCSC" id="uc010jih.2">
    <property type="organism name" value="human"/>
</dbReference>
<dbReference type="AGR" id="HGNC:6322"/>
<dbReference type="CTD" id="285643"/>
<dbReference type="DisGeNET" id="285643"/>
<dbReference type="GeneCards" id="KIF4B"/>
<dbReference type="HGNC" id="HGNC:6322">
    <property type="gene designation" value="KIF4B"/>
</dbReference>
<dbReference type="HPA" id="ENSG00000226650">
    <property type="expression patterns" value="Tissue enriched (testis)"/>
</dbReference>
<dbReference type="MIM" id="609184">
    <property type="type" value="gene"/>
</dbReference>
<dbReference type="neXtProt" id="NX_Q2VIQ3"/>
<dbReference type="OpenTargets" id="ENSG00000226650"/>
<dbReference type="PharmGKB" id="PA30106"/>
<dbReference type="VEuPathDB" id="HostDB:ENSG00000226650"/>
<dbReference type="eggNOG" id="KOG0244">
    <property type="taxonomic scope" value="Eukaryota"/>
</dbReference>
<dbReference type="GeneTree" id="ENSGT00940000164190"/>
<dbReference type="HOGENOM" id="CLU_001485_4_1_1"/>
<dbReference type="InParanoid" id="Q2VIQ3"/>
<dbReference type="OMA" id="DAFTTHH"/>
<dbReference type="OrthoDB" id="3176171at2759"/>
<dbReference type="PAN-GO" id="Q2VIQ3">
    <property type="GO annotations" value="4 GO annotations based on evolutionary models"/>
</dbReference>
<dbReference type="PhylomeDB" id="Q2VIQ3"/>
<dbReference type="TreeFam" id="TF105224"/>
<dbReference type="PathwayCommons" id="Q2VIQ3"/>
<dbReference type="Reactome" id="R-HSA-2132295">
    <property type="pathway name" value="MHC class II antigen presentation"/>
</dbReference>
<dbReference type="Reactome" id="R-HSA-437239">
    <property type="pathway name" value="Recycling pathway of L1"/>
</dbReference>
<dbReference type="Reactome" id="R-HSA-6811434">
    <property type="pathway name" value="COPI-dependent Golgi-to-ER retrograde traffic"/>
</dbReference>
<dbReference type="Reactome" id="R-HSA-983189">
    <property type="pathway name" value="Kinesins"/>
</dbReference>
<dbReference type="SignaLink" id="Q2VIQ3"/>
<dbReference type="BioGRID-ORCS" id="285643">
    <property type="hits" value="13 hits in 1144 CRISPR screens"/>
</dbReference>
<dbReference type="ChiTaRS" id="KIF4B">
    <property type="organism name" value="human"/>
</dbReference>
<dbReference type="GenomeRNAi" id="285643"/>
<dbReference type="Pharos" id="Q2VIQ3">
    <property type="development level" value="Tbio"/>
</dbReference>
<dbReference type="PRO" id="PR:Q2VIQ3"/>
<dbReference type="Proteomes" id="UP000005640">
    <property type="component" value="Chromosome 5"/>
</dbReference>
<dbReference type="RNAct" id="Q2VIQ3">
    <property type="molecule type" value="protein"/>
</dbReference>
<dbReference type="Bgee" id="ENSG00000226650">
    <property type="expression patterns" value="Expressed in male germ line stem cell (sensu Vertebrata) in testis and 3 other cell types or tissues"/>
</dbReference>
<dbReference type="GO" id="GO:0005829">
    <property type="term" value="C:cytosol"/>
    <property type="evidence" value="ECO:0000304"/>
    <property type="project" value="Reactome"/>
</dbReference>
<dbReference type="GO" id="GO:0005874">
    <property type="term" value="C:microtubule"/>
    <property type="evidence" value="ECO:0007669"/>
    <property type="project" value="UniProtKB-KW"/>
</dbReference>
<dbReference type="GO" id="GO:0005875">
    <property type="term" value="C:microtubule associated complex"/>
    <property type="evidence" value="ECO:0000318"/>
    <property type="project" value="GO_Central"/>
</dbReference>
<dbReference type="GO" id="GO:0016363">
    <property type="term" value="C:nuclear matrix"/>
    <property type="evidence" value="ECO:0007669"/>
    <property type="project" value="UniProtKB-SubCell"/>
</dbReference>
<dbReference type="GO" id="GO:0005524">
    <property type="term" value="F:ATP binding"/>
    <property type="evidence" value="ECO:0007669"/>
    <property type="project" value="UniProtKB-KW"/>
</dbReference>
<dbReference type="GO" id="GO:0003677">
    <property type="term" value="F:DNA binding"/>
    <property type="evidence" value="ECO:0007669"/>
    <property type="project" value="UniProtKB-KW"/>
</dbReference>
<dbReference type="GO" id="GO:0051536">
    <property type="term" value="F:iron-sulfur cluster binding"/>
    <property type="evidence" value="ECO:0007669"/>
    <property type="project" value="UniProtKB-KW"/>
</dbReference>
<dbReference type="GO" id="GO:0046872">
    <property type="term" value="F:metal ion binding"/>
    <property type="evidence" value="ECO:0007669"/>
    <property type="project" value="UniProtKB-KW"/>
</dbReference>
<dbReference type="GO" id="GO:0008017">
    <property type="term" value="F:microtubule binding"/>
    <property type="evidence" value="ECO:0007669"/>
    <property type="project" value="InterPro"/>
</dbReference>
<dbReference type="GO" id="GO:0003777">
    <property type="term" value="F:microtubule motor activity"/>
    <property type="evidence" value="ECO:0000318"/>
    <property type="project" value="GO_Central"/>
</dbReference>
<dbReference type="GO" id="GO:0007018">
    <property type="term" value="P:microtubule-based movement"/>
    <property type="evidence" value="ECO:0007669"/>
    <property type="project" value="InterPro"/>
</dbReference>
<dbReference type="GO" id="GO:0000281">
    <property type="term" value="P:mitotic cytokinesis"/>
    <property type="evidence" value="ECO:0000315"/>
    <property type="project" value="UniProtKB"/>
</dbReference>
<dbReference type="GO" id="GO:0051256">
    <property type="term" value="P:mitotic spindle midzone assembly"/>
    <property type="evidence" value="ECO:0000315"/>
    <property type="project" value="UniProtKB"/>
</dbReference>
<dbReference type="GO" id="GO:0007052">
    <property type="term" value="P:mitotic spindle organization"/>
    <property type="evidence" value="ECO:0000318"/>
    <property type="project" value="GO_Central"/>
</dbReference>
<dbReference type="GO" id="GO:0051231">
    <property type="term" value="P:spindle elongation"/>
    <property type="evidence" value="ECO:0000318"/>
    <property type="project" value="GO_Central"/>
</dbReference>
<dbReference type="CDD" id="cd01372">
    <property type="entry name" value="KISc_KIF4"/>
    <property type="match status" value="1"/>
</dbReference>
<dbReference type="FunFam" id="3.40.850.10:FF:000038">
    <property type="entry name" value="chromosome-associated kinesin KIF4A"/>
    <property type="match status" value="1"/>
</dbReference>
<dbReference type="Gene3D" id="3.40.850.10">
    <property type="entry name" value="Kinesin motor domain"/>
    <property type="match status" value="1"/>
</dbReference>
<dbReference type="InterPro" id="IPR027640">
    <property type="entry name" value="Kinesin-like_fam"/>
</dbReference>
<dbReference type="InterPro" id="IPR019821">
    <property type="entry name" value="Kinesin_motor_CS"/>
</dbReference>
<dbReference type="InterPro" id="IPR001752">
    <property type="entry name" value="Kinesin_motor_dom"/>
</dbReference>
<dbReference type="InterPro" id="IPR036961">
    <property type="entry name" value="Kinesin_motor_dom_sf"/>
</dbReference>
<dbReference type="InterPro" id="IPR027417">
    <property type="entry name" value="P-loop_NTPase"/>
</dbReference>
<dbReference type="InterPro" id="IPR033467">
    <property type="entry name" value="Tesmin/TSO1-like_CXC"/>
</dbReference>
<dbReference type="PANTHER" id="PTHR47969">
    <property type="entry name" value="CHROMOSOME-ASSOCIATED KINESIN KIF4A-RELATED"/>
    <property type="match status" value="1"/>
</dbReference>
<dbReference type="PANTHER" id="PTHR47969:SF15">
    <property type="entry name" value="CHROMOSOME-ASSOCIATED KINESIN KIF4A-RELATED"/>
    <property type="match status" value="1"/>
</dbReference>
<dbReference type="Pfam" id="PF00225">
    <property type="entry name" value="Kinesin"/>
    <property type="match status" value="1"/>
</dbReference>
<dbReference type="PRINTS" id="PR00380">
    <property type="entry name" value="KINESINHEAVY"/>
</dbReference>
<dbReference type="SMART" id="SM01114">
    <property type="entry name" value="CXC"/>
    <property type="match status" value="1"/>
</dbReference>
<dbReference type="SMART" id="SM00129">
    <property type="entry name" value="KISc"/>
    <property type="match status" value="1"/>
</dbReference>
<dbReference type="SUPFAM" id="SSF52540">
    <property type="entry name" value="P-loop containing nucleoside triphosphate hydrolases"/>
    <property type="match status" value="1"/>
</dbReference>
<dbReference type="PROSITE" id="PS00411">
    <property type="entry name" value="KINESIN_MOTOR_1"/>
    <property type="match status" value="1"/>
</dbReference>
<dbReference type="PROSITE" id="PS50067">
    <property type="entry name" value="KINESIN_MOTOR_2"/>
    <property type="match status" value="1"/>
</dbReference>
<protein>
    <recommendedName>
        <fullName>Chromosome-associated kinesin KIF4B</fullName>
    </recommendedName>
    <alternativeName>
        <fullName>Chromokinesin-B</fullName>
    </alternativeName>
</protein>
<name>KIF4B_HUMAN</name>
<feature type="chain" id="PRO_0000301666" description="Chromosome-associated kinesin KIF4B">
    <location>
        <begin position="1"/>
        <end position="1234"/>
    </location>
</feature>
<feature type="domain" description="Kinesin motor" evidence="5">
    <location>
        <begin position="9"/>
        <end position="336"/>
    </location>
</feature>
<feature type="region of interest" description="Disordered" evidence="6">
    <location>
        <begin position="494"/>
        <end position="513"/>
    </location>
</feature>
<feature type="region of interest" description="Interaction with PRC1" evidence="2">
    <location>
        <begin position="663"/>
        <end position="1234"/>
    </location>
</feature>
<feature type="region of interest" description="Disordered" evidence="6">
    <location>
        <begin position="712"/>
        <end position="737"/>
    </location>
</feature>
<feature type="region of interest" description="Globular" evidence="1">
    <location>
        <begin position="1000"/>
        <end position="1234"/>
    </location>
</feature>
<feature type="region of interest" description="Disordered" evidence="6">
    <location>
        <begin position="1007"/>
        <end position="1030"/>
    </location>
</feature>
<feature type="region of interest" description="Disordered" evidence="6">
    <location>
        <begin position="1052"/>
        <end position="1076"/>
    </location>
</feature>
<feature type="region of interest" description="CRD; required for [4Fe-4S] cluster binding and localization to the spindle midzone and midbody during anaphase and telophase" evidence="2">
    <location>
        <begin position="1086"/>
        <end position="1144"/>
    </location>
</feature>
<feature type="region of interest" description="Disordered" evidence="6">
    <location>
        <begin position="1122"/>
        <end position="1143"/>
    </location>
</feature>
<feature type="region of interest" description="Disordered" evidence="6">
    <location>
        <begin position="1183"/>
        <end position="1234"/>
    </location>
</feature>
<feature type="coiled-coil region" evidence="4">
    <location>
        <begin position="350"/>
        <end position="999"/>
    </location>
</feature>
<feature type="short sequence motif" description="Nuclear localization signal" evidence="2">
    <location>
        <begin position="793"/>
        <end position="798"/>
    </location>
</feature>
<feature type="compositionally biased region" description="Polar residues" evidence="6">
    <location>
        <begin position="498"/>
        <end position="513"/>
    </location>
</feature>
<feature type="compositionally biased region" description="Basic and acidic residues" evidence="6">
    <location>
        <begin position="713"/>
        <end position="737"/>
    </location>
</feature>
<feature type="compositionally biased region" description="Acidic residues" evidence="6">
    <location>
        <begin position="1056"/>
        <end position="1071"/>
    </location>
</feature>
<feature type="binding site" evidence="5">
    <location>
        <begin position="88"/>
        <end position="95"/>
    </location>
    <ligand>
        <name>ATP</name>
        <dbReference type="ChEBI" id="CHEBI:30616"/>
    </ligand>
</feature>
<feature type="modified residue" description="Phosphoserine" evidence="3">
    <location>
        <position position="394"/>
    </location>
</feature>
<feature type="modified residue" description="Phosphothreonine" evidence="2">
    <location>
        <position position="799"/>
    </location>
</feature>
<feature type="modified residue" description="Phosphoserine" evidence="2">
    <location>
        <position position="801"/>
    </location>
</feature>
<feature type="modified residue" description="Phosphoserine" evidence="2">
    <location>
        <position position="951"/>
    </location>
</feature>
<feature type="modified residue" description="Phosphoserine" evidence="2">
    <location>
        <position position="1001"/>
    </location>
</feature>
<feature type="modified residue" description="Phosphoserine" evidence="2">
    <location>
        <position position="1013"/>
    </location>
</feature>
<feature type="modified residue" description="Phosphoserine" evidence="2">
    <location>
        <position position="1017"/>
    </location>
</feature>
<feature type="modified residue" description="Phosphoserine" evidence="2">
    <location>
        <position position="1028"/>
    </location>
</feature>
<feature type="modified residue" description="Phosphoserine" evidence="2">
    <location>
        <position position="1128"/>
    </location>
</feature>
<feature type="modified residue" description="Phosphothreonine" evidence="2">
    <location>
        <position position="1183"/>
    </location>
</feature>
<feature type="modified residue" description="Phosphoserine" evidence="2">
    <location>
        <position position="1188"/>
    </location>
</feature>
<feature type="modified residue" description="Phosphoserine" evidence="3">
    <location>
        <position position="1227"/>
    </location>
</feature>
<feature type="cross-link" description="Glycyl lysine isopeptide (Lys-Gly) (interchain with G-Cter in SUMO2)" evidence="2">
    <location>
        <position position="1196"/>
    </location>
</feature>
<feature type="sequence variant" id="VAR_049695" description="In dbSNP:rs17116709.">
    <original>E</original>
    <variation>Q</variation>
    <location>
        <position position="494"/>
    </location>
</feature>
<feature type="sequence variant" id="VAR_049696" description="In dbSNP:rs6580126." evidence="7">
    <original>R</original>
    <variation>L</variation>
    <location>
        <position position="580"/>
    </location>
</feature>
<feature type="sequence variant" id="VAR_049697" description="In dbSNP:rs17116710." evidence="7">
    <original>R</original>
    <variation>H</variation>
    <location>
        <position position="680"/>
    </location>
</feature>
<feature type="sequence variant" id="VAR_061281" description="In dbSNP:rs10056252.">
    <original>Y</original>
    <variation>C</variation>
    <location>
        <position position="684"/>
    </location>
</feature>
<feature type="sequence conflict" description="In Ref. 1; AF241316." evidence="8" ref="1">
    <original>K</original>
    <variation>Q</variation>
    <location>
        <position position="128"/>
    </location>
</feature>
<feature type="sequence conflict" description="In Ref. 1; AF241316." evidence="8" ref="1">
    <original>I</original>
    <variation>L</variation>
    <location>
        <position position="220"/>
    </location>
</feature>
<feature type="sequence conflict" description="In Ref. 1; AF241316." evidence="8" ref="1">
    <original>R</original>
    <variation>G</variation>
    <location>
        <position position="223"/>
    </location>
</feature>
<feature type="sequence conflict" description="In Ref. 1; AF241316." evidence="8" ref="1">
    <original>C</original>
    <variation>S</variation>
    <location>
        <position position="230"/>
    </location>
</feature>
<feature type="sequence conflict" description="In Ref. 1; AF241316." evidence="8" ref="1">
    <original>V</original>
    <variation>A</variation>
    <location>
        <position position="441"/>
    </location>
</feature>
<feature type="sequence conflict" description="In Ref. 1; AF241316." evidence="8" ref="1">
    <original>V</original>
    <variation>A</variation>
    <location>
        <position position="589"/>
    </location>
</feature>
<feature type="sequence conflict" description="In Ref. 1; AF241316." evidence="8" ref="1">
    <original>H</original>
    <variation>R</variation>
    <location>
        <position position="599"/>
    </location>
</feature>
<feature type="sequence conflict" description="In Ref. 1; AF241316." evidence="8" ref="1">
    <original>W</original>
    <variation>R</variation>
    <location>
        <position position="641"/>
    </location>
</feature>
<feature type="sequence conflict" description="In Ref. 1; AF241316." evidence="8" ref="1">
    <original>K</original>
    <variation>R</variation>
    <location>
        <position position="668"/>
    </location>
</feature>
<feature type="sequence conflict" description="In Ref. 1; AF241316." evidence="8" ref="1">
    <original>S</original>
    <variation>N</variation>
    <location>
        <position position="698"/>
    </location>
</feature>
<feature type="sequence conflict" description="In Ref. 1; AF241316." evidence="8" ref="1">
    <original>T</original>
    <variation>A</variation>
    <location>
        <position position="725"/>
    </location>
</feature>
<feature type="sequence conflict" description="In Ref. 1; AF241316." evidence="8" ref="1">
    <original>HGKEGI</original>
    <variation>RGMEGT</variation>
    <location>
        <begin position="734"/>
        <end position="739"/>
    </location>
</feature>
<feature type="sequence conflict" description="In Ref. 3; ABB92415." evidence="8" ref="3">
    <original>V</original>
    <variation>I</variation>
    <location>
        <position position="755"/>
    </location>
</feature>
<feature type="sequence conflict" description="In Ref. 1; AF241316." evidence="8" ref="1">
    <original>Q</original>
    <variation>P</variation>
    <location>
        <position position="957"/>
    </location>
</feature>
<feature type="sequence conflict" description="In Ref. 3; ABB92415." evidence="8" ref="3">
    <original>R</original>
    <variation>H</variation>
    <location>
        <position position="1029"/>
    </location>
</feature>
<evidence type="ECO:0000250" key="1"/>
<evidence type="ECO:0000250" key="2">
    <source>
        <dbReference type="UniProtKB" id="O95239"/>
    </source>
</evidence>
<evidence type="ECO:0000250" key="3">
    <source>
        <dbReference type="UniProtKB" id="P33174"/>
    </source>
</evidence>
<evidence type="ECO:0000255" key="4"/>
<evidence type="ECO:0000255" key="5">
    <source>
        <dbReference type="PROSITE-ProRule" id="PRU00283"/>
    </source>
</evidence>
<evidence type="ECO:0000256" key="6">
    <source>
        <dbReference type="SAM" id="MobiDB-lite"/>
    </source>
</evidence>
<evidence type="ECO:0000269" key="7">
    <source>
    </source>
</evidence>
<evidence type="ECO:0000305" key="8"/>
<proteinExistence type="evidence at protein level"/>
<keyword id="KW-0067">ATP-binding</keyword>
<keyword id="KW-0175">Coiled coil</keyword>
<keyword id="KW-0963">Cytoplasm</keyword>
<keyword id="KW-0206">Cytoskeleton</keyword>
<keyword id="KW-0238">DNA-binding</keyword>
<keyword id="KW-0408">Iron</keyword>
<keyword id="KW-0411">Iron-sulfur</keyword>
<keyword id="KW-1017">Isopeptide bond</keyword>
<keyword id="KW-0479">Metal-binding</keyword>
<keyword id="KW-0493">Microtubule</keyword>
<keyword id="KW-0505">Motor protein</keyword>
<keyword id="KW-0547">Nucleotide-binding</keyword>
<keyword id="KW-0539">Nucleus</keyword>
<keyword id="KW-0597">Phosphoprotein</keyword>
<keyword id="KW-1267">Proteomics identification</keyword>
<keyword id="KW-1185">Reference proteome</keyword>
<keyword id="KW-0832">Ubl conjugation</keyword>
<comment type="function">
    <text evidence="2 3">Iron-sulfur (Fe-S) cluster binding motor protein that has a role in chromosome segregation during mitosis (By similarity). Translocates PRC1 to the plus ends of interdigitating spindle microtubules during the metaphase to anaphase transition, an essential step for the formation of an organized central spindle midzone and midbody and for successful cytokinesis (By similarity). May play a role in mitotic chromosomal positioning and bipolar spindle stabilization (By similarity).</text>
</comment>
<comment type="cofactor">
    <cofactor evidence="2">
        <name>[2Fe-2S] cluster</name>
        <dbReference type="ChEBI" id="CHEBI:190135"/>
    </cofactor>
    <cofactor evidence="2">
        <name>[4Fe-4S] cluster</name>
        <dbReference type="ChEBI" id="CHEBI:49883"/>
    </cofactor>
    <text evidence="2">Binds 1 [4Fe-4S] cluster (By similarity). In the presence of oxygen, the [4Fe-4S] cluster may be converted to [2Fe-2S] (By similarity).</text>
</comment>
<comment type="subcellular location">
    <subcellularLocation>
        <location evidence="2">Nucleus matrix</location>
    </subcellularLocation>
    <subcellularLocation>
        <location evidence="8">Cytoplasm</location>
        <location evidence="8">Cytoskeleton</location>
    </subcellularLocation>
</comment>
<comment type="tissue specificity">
    <text evidence="7">Specifically expressed in testis.</text>
</comment>
<comment type="similarity">
    <text evidence="5">Belongs to the TRAFAC class myosin-kinesin ATPase superfamily. Kinesin family. Chromokinesin subfamily.</text>
</comment>
<organism>
    <name type="scientific">Homo sapiens</name>
    <name type="common">Human</name>
    <dbReference type="NCBI Taxonomy" id="9606"/>
    <lineage>
        <taxon>Eukaryota</taxon>
        <taxon>Metazoa</taxon>
        <taxon>Chordata</taxon>
        <taxon>Craniata</taxon>
        <taxon>Vertebrata</taxon>
        <taxon>Euteleostomi</taxon>
        <taxon>Mammalia</taxon>
        <taxon>Eutheria</taxon>
        <taxon>Euarchontoglires</taxon>
        <taxon>Primates</taxon>
        <taxon>Haplorrhini</taxon>
        <taxon>Catarrhini</taxon>
        <taxon>Hominidae</taxon>
        <taxon>Homo</taxon>
    </lineage>
</organism>
<accession>Q2VIQ3</accession>
<sequence>MKEEVKGIPVRVALRCRPLVPKEISEGCQMCLSFVPGETQVVVGTDKSFTYDFVFDPCTEQEEVFNKAVAPLIKGIFKGYNATVLAYGQTGSGKTYSMGGAYTAEQENEPTVGIIPRVIQLLFKEIDKKSDFEFTLKVSYLEIYNEEILDLLCPSREKAQINIREDPKEGIKIVGLTEKTVLVALDTVSCLEQGNNSRTVASTAMNSQSSRSHAIFTISIEQRKKSDKNCSFRSKLHLVDLAGSERQKKTKAEGDRLKEGININRGLLCLGNVISALGDDKKGSFVPYRDSKLTRLLQDSLGGNSHTLMIACVSPADSNLEETLSTLRYADRARKIKNKPIVNIDPHTAELNHLKQQVQQLQVLLLQAHGGTLPGSINAEPSENLQSLMEKNQSLVEENEKLSRCLSKAAGQTAQMLERIILTEQVNEKLNAKLEELRQHVACKLDLQKLVETLEDQELKENVEIICNLQQLITQLSDETVACTAAAIDTAVEEEAQVETSPETSRSSDAFTTQHALHQAQMSKEVVELNNALALKEALVRKMTQNDNQLQPIQFQYQDNIKNLELEVINLQKEKEELVRELQTAKKNVNQAKLSEHRHKLLQELEGQIADLKKKLNEQSKLLKLKESTERTVSKLNQEIWMMKNQRVQLMRQMKEDAEKFRQWKQKKDKEVIQLKERDRKRQYELLKLERNFQKQSSVLRRKTEEAAAANKRLKDALQKQREVTDKRKETQSHGKEGIAARVRNWLGNEIEVMVSTEEAKRHLNDLLEDRKILAQDVVQLKEKKESRENPPPKLRKCTFSLSEVHGQVLESEDCITKQIESLETEMELRSAQIADLQQKLLDAESEDRPKQCWENIATILEAKCALKYLIGELVSSKIHVTKLENSLRQSKASCADMQKMLFEEQNHFSEIETELQAELVRMEQQHQEKVLYLVSQLQESQMAEKQLEKSASEKEQQLVSTLQCQDEELEKMREVCEQNQQLLQENEIIKQKLILLQVASRQKHLPNDTLLSPDSSFEYIPPKPKPSRVKEKFLEQSMDIEDLKYCSEHSVNEHEDGDGDGDSDEGDDEEWKPTKLVKVSRKNIQGCSCKGWCGNKQCGCRKQKSDCGVDCSCDPTKCRNRQQGKDSLGTVEQTQDSEGSFKLEDPTEVTPGLSFFNPVCATPNSKILKEMCDMEQVLSKKTAPAPSPFDLPESKHGATEYQQNKPPGKKKKRALASNTSFFSGCSPIEEEAH</sequence>
<reference key="1">
    <citation type="journal article" date="2000" name="Biochim. Biophys. Acta">
        <title>Identification of the human homologue of mouse KIF4, a kinesin superfamily motor protein.</title>
        <authorList>
            <person name="Oh S.J."/>
            <person name="Hahn H."/>
            <person name="Torrey T.A."/>
            <person name="Shin H."/>
            <person name="Choi W."/>
            <person name="Lee Y.M."/>
            <person name="Morse H.C. III"/>
            <person name="Kim W."/>
        </authorList>
    </citation>
    <scope>NUCLEOTIDE SEQUENCE [GENOMIC DNA]</scope>
</reference>
<reference key="2">
    <citation type="journal article" date="2004" name="Nature">
        <title>The DNA sequence and comparative analysis of human chromosome 5.</title>
        <authorList>
            <person name="Schmutz J."/>
            <person name="Martin J."/>
            <person name="Terry A."/>
            <person name="Couronne O."/>
            <person name="Grimwood J."/>
            <person name="Lowry S."/>
            <person name="Gordon L.A."/>
            <person name="Scott D."/>
            <person name="Xie G."/>
            <person name="Huang W."/>
            <person name="Hellsten U."/>
            <person name="Tran-Gyamfi M."/>
            <person name="She X."/>
            <person name="Prabhakar S."/>
            <person name="Aerts A."/>
            <person name="Altherr M."/>
            <person name="Bajorek E."/>
            <person name="Black S."/>
            <person name="Branscomb E."/>
            <person name="Caoile C."/>
            <person name="Challacombe J.F."/>
            <person name="Chan Y.M."/>
            <person name="Denys M."/>
            <person name="Detter J.C."/>
            <person name="Escobar J."/>
            <person name="Flowers D."/>
            <person name="Fotopulos D."/>
            <person name="Glavina T."/>
            <person name="Gomez M."/>
            <person name="Gonzales E."/>
            <person name="Goodstein D."/>
            <person name="Grigoriev I."/>
            <person name="Groza M."/>
            <person name="Hammon N."/>
            <person name="Hawkins T."/>
            <person name="Haydu L."/>
            <person name="Israni S."/>
            <person name="Jett J."/>
            <person name="Kadner K."/>
            <person name="Kimball H."/>
            <person name="Kobayashi A."/>
            <person name="Lopez F."/>
            <person name="Lou Y."/>
            <person name="Martinez D."/>
            <person name="Medina C."/>
            <person name="Morgan J."/>
            <person name="Nandkeshwar R."/>
            <person name="Noonan J.P."/>
            <person name="Pitluck S."/>
            <person name="Pollard M."/>
            <person name="Predki P."/>
            <person name="Priest J."/>
            <person name="Ramirez L."/>
            <person name="Retterer J."/>
            <person name="Rodriguez A."/>
            <person name="Rogers S."/>
            <person name="Salamov A."/>
            <person name="Salazar A."/>
            <person name="Thayer N."/>
            <person name="Tice H."/>
            <person name="Tsai M."/>
            <person name="Ustaszewska A."/>
            <person name="Vo N."/>
            <person name="Wheeler J."/>
            <person name="Wu K."/>
            <person name="Yang J."/>
            <person name="Dickson M."/>
            <person name="Cheng J.-F."/>
            <person name="Eichler E.E."/>
            <person name="Olsen A."/>
            <person name="Pennacchio L.A."/>
            <person name="Rokhsar D.S."/>
            <person name="Richardson P."/>
            <person name="Lucas S.M."/>
            <person name="Myers R.M."/>
            <person name="Rubin E.M."/>
        </authorList>
    </citation>
    <scope>NUCLEOTIDE SEQUENCE [LARGE SCALE GENOMIC DNA]</scope>
</reference>
<reference key="3">
    <citation type="journal article" date="2005" name="PLoS Biol.">
        <title>Emergence of young human genes after a burst of retroposition in primates.</title>
        <authorList>
            <person name="Marques A.C."/>
            <person name="Dupanloup I."/>
            <person name="Vinckenbosch N."/>
            <person name="Reymond A."/>
            <person name="Kaessmann H."/>
        </authorList>
    </citation>
    <scope>NUCLEOTIDE SEQUENCE [GENOMIC DNA] OF 1-1185</scope>
    <scope>TISSUE SPECIFICITY</scope>
    <scope>VARIANTS LEU-580 AND HIS-680</scope>
</reference>
<gene>
    <name type="primary">KIF4B</name>
</gene>